<organism>
    <name type="scientific">Escherichia coli O17:K52:H18 (strain UMN026 / ExPEC)</name>
    <dbReference type="NCBI Taxonomy" id="585056"/>
    <lineage>
        <taxon>Bacteria</taxon>
        <taxon>Pseudomonadati</taxon>
        <taxon>Pseudomonadota</taxon>
        <taxon>Gammaproteobacteria</taxon>
        <taxon>Enterobacterales</taxon>
        <taxon>Enterobacteriaceae</taxon>
        <taxon>Escherichia</taxon>
    </lineage>
</organism>
<protein>
    <recommendedName>
        <fullName evidence="1">Adenosine deaminase</fullName>
        <ecNumber evidence="1">3.5.4.4</ecNumber>
    </recommendedName>
    <alternativeName>
        <fullName evidence="1">Adenosine aminohydrolase</fullName>
    </alternativeName>
</protein>
<comment type="function">
    <text evidence="1">Catalyzes the hydrolytic deamination of adenosine and 2-deoxyadenosine.</text>
</comment>
<comment type="catalytic activity">
    <reaction evidence="1">
        <text>adenosine + H2O + H(+) = inosine + NH4(+)</text>
        <dbReference type="Rhea" id="RHEA:24408"/>
        <dbReference type="ChEBI" id="CHEBI:15377"/>
        <dbReference type="ChEBI" id="CHEBI:15378"/>
        <dbReference type="ChEBI" id="CHEBI:16335"/>
        <dbReference type="ChEBI" id="CHEBI:17596"/>
        <dbReference type="ChEBI" id="CHEBI:28938"/>
        <dbReference type="EC" id="3.5.4.4"/>
    </reaction>
    <physiologicalReaction direction="left-to-right" evidence="1">
        <dbReference type="Rhea" id="RHEA:24409"/>
    </physiologicalReaction>
</comment>
<comment type="catalytic activity">
    <reaction evidence="1">
        <text>2'-deoxyadenosine + H2O + H(+) = 2'-deoxyinosine + NH4(+)</text>
        <dbReference type="Rhea" id="RHEA:28190"/>
        <dbReference type="ChEBI" id="CHEBI:15377"/>
        <dbReference type="ChEBI" id="CHEBI:15378"/>
        <dbReference type="ChEBI" id="CHEBI:17256"/>
        <dbReference type="ChEBI" id="CHEBI:28938"/>
        <dbReference type="ChEBI" id="CHEBI:28997"/>
        <dbReference type="EC" id="3.5.4.4"/>
    </reaction>
    <physiologicalReaction direction="left-to-right" evidence="1">
        <dbReference type="Rhea" id="RHEA:28191"/>
    </physiologicalReaction>
</comment>
<comment type="cofactor">
    <cofactor evidence="1">
        <name>Zn(2+)</name>
        <dbReference type="ChEBI" id="CHEBI:29105"/>
    </cofactor>
    <text evidence="1">Binds 1 zinc ion per subunit.</text>
</comment>
<comment type="similarity">
    <text evidence="1">Belongs to the metallo-dependent hydrolases superfamily. Adenosine and AMP deaminases family. Adenosine deaminase subfamily.</text>
</comment>
<name>ADD_ECOLU</name>
<sequence length="333" mass="36397">MIDTTLPLTDIHRHLDGNIRPQTILELGRQYNISLPAQSLETLIPHVQVIANEPDLVSFLTKLDWGVKVLASLDACRRVAFENIEDAARHGLHYVELRFSPGYMAMAHQLPVAGVVEAVIDGVREGCRTFGVQAKLIGIMSRTFGEAACQQELEAFLAHRDQITALDLAGDELGFPGSLFLSHFNRARDAGWHITVHAGEAAGPESIWQAIRELGAERIGHGVKAIEDRALMDFLAEQQIGIESCLTSNIQTSTVAELAAHPLKTFLEHGIRASINTDDPGVQGVDIIHEYTVAAPAAGLSREQIRQAQINGLEMAFLSAEEKRALREKVAAK</sequence>
<dbReference type="EC" id="3.5.4.4" evidence="1"/>
<dbReference type="EMBL" id="CU928163">
    <property type="protein sequence ID" value="CAR13110.1"/>
    <property type="molecule type" value="Genomic_DNA"/>
</dbReference>
<dbReference type="RefSeq" id="WP_000567490.1">
    <property type="nucleotide sequence ID" value="NC_011751.1"/>
</dbReference>
<dbReference type="RefSeq" id="YP_002412642.1">
    <property type="nucleotide sequence ID" value="NC_011751.1"/>
</dbReference>
<dbReference type="SMR" id="B7NB76"/>
<dbReference type="STRING" id="585056.ECUMN_1913"/>
<dbReference type="GeneID" id="75204467"/>
<dbReference type="KEGG" id="eum:ECUMN_1913"/>
<dbReference type="PATRIC" id="fig|585056.7.peg.2097"/>
<dbReference type="HOGENOM" id="CLU_039228_0_2_6"/>
<dbReference type="Proteomes" id="UP000007097">
    <property type="component" value="Chromosome"/>
</dbReference>
<dbReference type="GO" id="GO:0005829">
    <property type="term" value="C:cytosol"/>
    <property type="evidence" value="ECO:0007669"/>
    <property type="project" value="TreeGrafter"/>
</dbReference>
<dbReference type="GO" id="GO:0046936">
    <property type="term" value="F:2'-deoxyadenosine deaminase activity"/>
    <property type="evidence" value="ECO:0007669"/>
    <property type="project" value="RHEA"/>
</dbReference>
<dbReference type="GO" id="GO:0004000">
    <property type="term" value="F:adenosine deaminase activity"/>
    <property type="evidence" value="ECO:0007669"/>
    <property type="project" value="UniProtKB-UniRule"/>
</dbReference>
<dbReference type="GO" id="GO:0008270">
    <property type="term" value="F:zinc ion binding"/>
    <property type="evidence" value="ECO:0007669"/>
    <property type="project" value="UniProtKB-UniRule"/>
</dbReference>
<dbReference type="GO" id="GO:0006154">
    <property type="term" value="P:adenosine catabolic process"/>
    <property type="evidence" value="ECO:0007669"/>
    <property type="project" value="TreeGrafter"/>
</dbReference>
<dbReference type="GO" id="GO:0043103">
    <property type="term" value="P:hypoxanthine salvage"/>
    <property type="evidence" value="ECO:0007669"/>
    <property type="project" value="TreeGrafter"/>
</dbReference>
<dbReference type="GO" id="GO:0046103">
    <property type="term" value="P:inosine biosynthetic process"/>
    <property type="evidence" value="ECO:0007669"/>
    <property type="project" value="TreeGrafter"/>
</dbReference>
<dbReference type="GO" id="GO:0009117">
    <property type="term" value="P:nucleotide metabolic process"/>
    <property type="evidence" value="ECO:0007669"/>
    <property type="project" value="UniProtKB-KW"/>
</dbReference>
<dbReference type="GO" id="GO:0009168">
    <property type="term" value="P:purine ribonucleoside monophosphate biosynthetic process"/>
    <property type="evidence" value="ECO:0007669"/>
    <property type="project" value="UniProtKB-UniRule"/>
</dbReference>
<dbReference type="CDD" id="cd01320">
    <property type="entry name" value="ADA"/>
    <property type="match status" value="1"/>
</dbReference>
<dbReference type="FunFam" id="3.20.20.140:FF:000009">
    <property type="entry name" value="Adenosine deaminase"/>
    <property type="match status" value="1"/>
</dbReference>
<dbReference type="Gene3D" id="3.20.20.140">
    <property type="entry name" value="Metal-dependent hydrolases"/>
    <property type="match status" value="1"/>
</dbReference>
<dbReference type="HAMAP" id="MF_00540">
    <property type="entry name" value="A_deaminase"/>
    <property type="match status" value="1"/>
</dbReference>
<dbReference type="InterPro" id="IPR006650">
    <property type="entry name" value="A/AMP_deam_AS"/>
</dbReference>
<dbReference type="InterPro" id="IPR028893">
    <property type="entry name" value="A_deaminase"/>
</dbReference>
<dbReference type="InterPro" id="IPR001365">
    <property type="entry name" value="A_deaminase_dom"/>
</dbReference>
<dbReference type="InterPro" id="IPR006330">
    <property type="entry name" value="Ado/ade_deaminase"/>
</dbReference>
<dbReference type="InterPro" id="IPR032466">
    <property type="entry name" value="Metal_Hydrolase"/>
</dbReference>
<dbReference type="NCBIfam" id="TIGR01430">
    <property type="entry name" value="aden_deam"/>
    <property type="match status" value="1"/>
</dbReference>
<dbReference type="NCBIfam" id="NF006846">
    <property type="entry name" value="PRK09358.1-1"/>
    <property type="match status" value="1"/>
</dbReference>
<dbReference type="PANTHER" id="PTHR11409">
    <property type="entry name" value="ADENOSINE DEAMINASE"/>
    <property type="match status" value="1"/>
</dbReference>
<dbReference type="PANTHER" id="PTHR11409:SF43">
    <property type="entry name" value="ADENOSINE DEAMINASE"/>
    <property type="match status" value="1"/>
</dbReference>
<dbReference type="Pfam" id="PF00962">
    <property type="entry name" value="A_deaminase"/>
    <property type="match status" value="1"/>
</dbReference>
<dbReference type="SUPFAM" id="SSF51556">
    <property type="entry name" value="Metallo-dependent hydrolases"/>
    <property type="match status" value="1"/>
</dbReference>
<dbReference type="PROSITE" id="PS00485">
    <property type="entry name" value="A_DEAMINASE"/>
    <property type="match status" value="1"/>
</dbReference>
<accession>B7NB76</accession>
<reference key="1">
    <citation type="journal article" date="2009" name="PLoS Genet.">
        <title>Organised genome dynamics in the Escherichia coli species results in highly diverse adaptive paths.</title>
        <authorList>
            <person name="Touchon M."/>
            <person name="Hoede C."/>
            <person name="Tenaillon O."/>
            <person name="Barbe V."/>
            <person name="Baeriswyl S."/>
            <person name="Bidet P."/>
            <person name="Bingen E."/>
            <person name="Bonacorsi S."/>
            <person name="Bouchier C."/>
            <person name="Bouvet O."/>
            <person name="Calteau A."/>
            <person name="Chiapello H."/>
            <person name="Clermont O."/>
            <person name="Cruveiller S."/>
            <person name="Danchin A."/>
            <person name="Diard M."/>
            <person name="Dossat C."/>
            <person name="Karoui M.E."/>
            <person name="Frapy E."/>
            <person name="Garry L."/>
            <person name="Ghigo J.M."/>
            <person name="Gilles A.M."/>
            <person name="Johnson J."/>
            <person name="Le Bouguenec C."/>
            <person name="Lescat M."/>
            <person name="Mangenot S."/>
            <person name="Martinez-Jehanne V."/>
            <person name="Matic I."/>
            <person name="Nassif X."/>
            <person name="Oztas S."/>
            <person name="Petit M.A."/>
            <person name="Pichon C."/>
            <person name="Rouy Z."/>
            <person name="Ruf C.S."/>
            <person name="Schneider D."/>
            <person name="Tourret J."/>
            <person name="Vacherie B."/>
            <person name="Vallenet D."/>
            <person name="Medigue C."/>
            <person name="Rocha E.P.C."/>
            <person name="Denamur E."/>
        </authorList>
    </citation>
    <scope>NUCLEOTIDE SEQUENCE [LARGE SCALE GENOMIC DNA]</scope>
    <source>
        <strain>UMN026 / ExPEC</strain>
    </source>
</reference>
<feature type="chain" id="PRO_1000128844" description="Adenosine deaminase">
    <location>
        <begin position="1"/>
        <end position="333"/>
    </location>
</feature>
<feature type="active site" description="Proton donor" evidence="1">
    <location>
        <position position="200"/>
    </location>
</feature>
<feature type="binding site" evidence="1">
    <location>
        <position position="12"/>
    </location>
    <ligand>
        <name>Zn(2+)</name>
        <dbReference type="ChEBI" id="CHEBI:29105"/>
        <note>catalytic</note>
    </ligand>
</feature>
<feature type="binding site" evidence="1">
    <location>
        <position position="14"/>
    </location>
    <ligand>
        <name>substrate</name>
    </ligand>
</feature>
<feature type="binding site" evidence="1">
    <location>
        <position position="14"/>
    </location>
    <ligand>
        <name>Zn(2+)</name>
        <dbReference type="ChEBI" id="CHEBI:29105"/>
        <note>catalytic</note>
    </ligand>
</feature>
<feature type="binding site" evidence="1">
    <location>
        <position position="16"/>
    </location>
    <ligand>
        <name>substrate</name>
    </ligand>
</feature>
<feature type="binding site" evidence="1">
    <location>
        <position position="170"/>
    </location>
    <ligand>
        <name>substrate</name>
    </ligand>
</feature>
<feature type="binding site" evidence="1">
    <location>
        <position position="197"/>
    </location>
    <ligand>
        <name>Zn(2+)</name>
        <dbReference type="ChEBI" id="CHEBI:29105"/>
        <note>catalytic</note>
    </ligand>
</feature>
<feature type="binding site" evidence="1">
    <location>
        <position position="278"/>
    </location>
    <ligand>
        <name>Zn(2+)</name>
        <dbReference type="ChEBI" id="CHEBI:29105"/>
        <note>catalytic</note>
    </ligand>
</feature>
<feature type="binding site" evidence="1">
    <location>
        <position position="279"/>
    </location>
    <ligand>
        <name>substrate</name>
    </ligand>
</feature>
<feature type="site" description="Important for catalytic activity" evidence="1">
    <location>
        <position position="221"/>
    </location>
</feature>
<gene>
    <name evidence="1" type="primary">add</name>
    <name type="ordered locus">ECUMN_1913</name>
</gene>
<keyword id="KW-0378">Hydrolase</keyword>
<keyword id="KW-0479">Metal-binding</keyword>
<keyword id="KW-0546">Nucleotide metabolism</keyword>
<keyword id="KW-0862">Zinc</keyword>
<evidence type="ECO:0000255" key="1">
    <source>
        <dbReference type="HAMAP-Rule" id="MF_00540"/>
    </source>
</evidence>
<proteinExistence type="inferred from homology"/>